<keyword id="KW-0963">Cytoplasm</keyword>
<keyword id="KW-0378">Hydrolase</keyword>
<keyword id="KW-0540">Nuclease</keyword>
<keyword id="KW-1185">Reference proteome</keyword>
<keyword id="KW-0690">Ribosome biogenesis</keyword>
<protein>
    <recommendedName>
        <fullName evidence="1">Putative pre-16S rRNA nuclease</fullName>
        <ecNumber evidence="1">3.1.-.-</ecNumber>
    </recommendedName>
</protein>
<gene>
    <name type="ordered locus">SPy_2113</name>
    <name type="ordered locus">M5005_Spy1796</name>
</gene>
<feature type="chain" id="PRO_0000172151" description="Putative pre-16S rRNA nuclease">
    <location>
        <begin position="1"/>
        <end position="139"/>
    </location>
</feature>
<accession>Q99XP4</accession>
<accession>Q48W61</accession>
<organism>
    <name type="scientific">Streptococcus pyogenes serotype M1</name>
    <dbReference type="NCBI Taxonomy" id="301447"/>
    <lineage>
        <taxon>Bacteria</taxon>
        <taxon>Bacillati</taxon>
        <taxon>Bacillota</taxon>
        <taxon>Bacilli</taxon>
        <taxon>Lactobacillales</taxon>
        <taxon>Streptococcaceae</taxon>
        <taxon>Streptococcus</taxon>
    </lineage>
</organism>
<reference key="1">
    <citation type="journal article" date="2001" name="Proc. Natl. Acad. Sci. U.S.A.">
        <title>Complete genome sequence of an M1 strain of Streptococcus pyogenes.</title>
        <authorList>
            <person name="Ferretti J.J."/>
            <person name="McShan W.M."/>
            <person name="Ajdic D.J."/>
            <person name="Savic D.J."/>
            <person name="Savic G."/>
            <person name="Lyon K."/>
            <person name="Primeaux C."/>
            <person name="Sezate S."/>
            <person name="Suvorov A.N."/>
            <person name="Kenton S."/>
            <person name="Lai H.S."/>
            <person name="Lin S.P."/>
            <person name="Qian Y."/>
            <person name="Jia H.G."/>
            <person name="Najar F.Z."/>
            <person name="Ren Q."/>
            <person name="Zhu H."/>
            <person name="Song L."/>
            <person name="White J."/>
            <person name="Yuan X."/>
            <person name="Clifton S.W."/>
            <person name="Roe B.A."/>
            <person name="McLaughlin R.E."/>
        </authorList>
    </citation>
    <scope>NUCLEOTIDE SEQUENCE [LARGE SCALE GENOMIC DNA]</scope>
    <source>
        <strain>ATCC 700294 / SF370 / Serotype M1</strain>
    </source>
</reference>
<reference key="2">
    <citation type="journal article" date="2005" name="J. Infect. Dis.">
        <title>Evolutionary origin and emergence of a highly successful clone of serotype M1 group A Streptococcus involved multiple horizontal gene transfer events.</title>
        <authorList>
            <person name="Sumby P."/>
            <person name="Porcella S.F."/>
            <person name="Madrigal A.G."/>
            <person name="Barbian K.D."/>
            <person name="Virtaneva K."/>
            <person name="Ricklefs S.M."/>
            <person name="Sturdevant D.E."/>
            <person name="Graham M.R."/>
            <person name="Vuopio-Varkila J."/>
            <person name="Hoe N.P."/>
            <person name="Musser J.M."/>
        </authorList>
    </citation>
    <scope>NUCLEOTIDE SEQUENCE [LARGE SCALE GENOMIC DNA]</scope>
    <source>
        <strain>ATCC BAA-947 / MGAS5005 / Serotype M1</strain>
    </source>
</reference>
<name>YQGF_STRP1</name>
<sequence length="139" mass="15759">MRIMGLDVGSKTVGVAISDPLGFTAQGLEIIKIDEEKAEFGFTRLEELVKQYQVEQFVIGLPKNMNNTNGPRVDASITYGNHIEHLFGLPVHYQDERLTTVEAKRMLIEQADISRGKRKKVIDKLAAQLILQNYLNRNF</sequence>
<dbReference type="EC" id="3.1.-.-" evidence="1"/>
<dbReference type="EMBL" id="AE004092">
    <property type="protein sequence ID" value="AAK34758.1"/>
    <property type="molecule type" value="Genomic_DNA"/>
</dbReference>
<dbReference type="EMBL" id="CP000017">
    <property type="protein sequence ID" value="AAZ52414.1"/>
    <property type="molecule type" value="Genomic_DNA"/>
</dbReference>
<dbReference type="RefSeq" id="NP_270037.1">
    <property type="nucleotide sequence ID" value="NC_002737.2"/>
</dbReference>
<dbReference type="SMR" id="Q99XP4"/>
<dbReference type="PaxDb" id="1314-HKU360_01910"/>
<dbReference type="KEGG" id="spy:SPy_2113"/>
<dbReference type="KEGG" id="spz:M5005_Spy1796"/>
<dbReference type="PATRIC" id="fig|160490.10.peg.1830"/>
<dbReference type="HOGENOM" id="CLU_098240_2_0_9"/>
<dbReference type="OMA" id="PMGWTAQ"/>
<dbReference type="Proteomes" id="UP000000750">
    <property type="component" value="Chromosome"/>
</dbReference>
<dbReference type="GO" id="GO:0005829">
    <property type="term" value="C:cytosol"/>
    <property type="evidence" value="ECO:0007669"/>
    <property type="project" value="TreeGrafter"/>
</dbReference>
<dbReference type="GO" id="GO:0004518">
    <property type="term" value="F:nuclease activity"/>
    <property type="evidence" value="ECO:0007669"/>
    <property type="project" value="UniProtKB-KW"/>
</dbReference>
<dbReference type="GO" id="GO:0000967">
    <property type="term" value="P:rRNA 5'-end processing"/>
    <property type="evidence" value="ECO:0007669"/>
    <property type="project" value="UniProtKB-UniRule"/>
</dbReference>
<dbReference type="CDD" id="cd16964">
    <property type="entry name" value="YqgF"/>
    <property type="match status" value="1"/>
</dbReference>
<dbReference type="FunFam" id="3.30.420.140:FF:000003">
    <property type="entry name" value="Putative pre-16S rRNA nuclease"/>
    <property type="match status" value="1"/>
</dbReference>
<dbReference type="Gene3D" id="3.30.420.140">
    <property type="entry name" value="YqgF/RNase H-like domain"/>
    <property type="match status" value="1"/>
</dbReference>
<dbReference type="HAMAP" id="MF_00651">
    <property type="entry name" value="Nuclease_YqgF"/>
    <property type="match status" value="1"/>
</dbReference>
<dbReference type="InterPro" id="IPR012337">
    <property type="entry name" value="RNaseH-like_sf"/>
</dbReference>
<dbReference type="InterPro" id="IPR005227">
    <property type="entry name" value="YqgF"/>
</dbReference>
<dbReference type="InterPro" id="IPR006641">
    <property type="entry name" value="YqgF/RNaseH-like_dom"/>
</dbReference>
<dbReference type="InterPro" id="IPR037027">
    <property type="entry name" value="YqgF/RNaseH-like_dom_sf"/>
</dbReference>
<dbReference type="NCBIfam" id="TIGR00250">
    <property type="entry name" value="RNAse_H_YqgF"/>
    <property type="match status" value="1"/>
</dbReference>
<dbReference type="PANTHER" id="PTHR33317">
    <property type="entry name" value="POLYNUCLEOTIDYL TRANSFERASE, RIBONUCLEASE H-LIKE SUPERFAMILY PROTEIN"/>
    <property type="match status" value="1"/>
</dbReference>
<dbReference type="PANTHER" id="PTHR33317:SF4">
    <property type="entry name" value="POLYNUCLEOTIDYL TRANSFERASE, RIBONUCLEASE H-LIKE SUPERFAMILY PROTEIN"/>
    <property type="match status" value="1"/>
</dbReference>
<dbReference type="Pfam" id="PF03652">
    <property type="entry name" value="RuvX"/>
    <property type="match status" value="1"/>
</dbReference>
<dbReference type="SMART" id="SM00732">
    <property type="entry name" value="YqgFc"/>
    <property type="match status" value="1"/>
</dbReference>
<dbReference type="SUPFAM" id="SSF53098">
    <property type="entry name" value="Ribonuclease H-like"/>
    <property type="match status" value="1"/>
</dbReference>
<proteinExistence type="inferred from homology"/>
<evidence type="ECO:0000255" key="1">
    <source>
        <dbReference type="HAMAP-Rule" id="MF_00651"/>
    </source>
</evidence>
<comment type="function">
    <text evidence="1">Could be a nuclease involved in processing of the 5'-end of pre-16S rRNA.</text>
</comment>
<comment type="subcellular location">
    <subcellularLocation>
        <location evidence="1">Cytoplasm</location>
    </subcellularLocation>
</comment>
<comment type="similarity">
    <text evidence="1">Belongs to the YqgF nuclease family.</text>
</comment>